<name>ILVC_VIBC3</name>
<protein>
    <recommendedName>
        <fullName evidence="1">Ketol-acid reductoisomerase (NADP(+))</fullName>
        <shortName evidence="1">KARI</shortName>
        <ecNumber evidence="1">1.1.1.86</ecNumber>
    </recommendedName>
    <alternativeName>
        <fullName evidence="1">Acetohydroxy-acid isomeroreductase</fullName>
        <shortName evidence="1">AHIR</shortName>
    </alternativeName>
    <alternativeName>
        <fullName evidence="1">Alpha-keto-beta-hydroxylacyl reductoisomerase</fullName>
    </alternativeName>
    <alternativeName>
        <fullName evidence="1">Ketol-acid reductoisomerase type 2</fullName>
    </alternativeName>
    <alternativeName>
        <fullName evidence="1">Ketol-acid reductoisomerase type II</fullName>
    </alternativeName>
</protein>
<sequence length="494" mass="54612">MANYFNTLNLREQLDQLGRCRFMAREEFATEADYLKGKKVVIVGCGAQGLNQGLNMRDSGLDVSYALRQAAIDEQRQSFKNAKNNGFNVGSYEQLIPTADLVINLTPDKQHTSVVNAVMPLMKQGAALGYSHGFNIVEEGMQIRKDITVVMVAPKCPGTEVREEYKRGFGVPTLIAVHPENDPQGEGWEIAKAWAAATGGHRAGCLASSFVAEVKSDLMGEQTILCGMLQAGSIVCYEKMVADGIDPGYAGKLLQFGWETITEALKFGGITHMMDRLSNPAKIKAFELSEELKDLMRPLYNKHMDDIISGHFSSTMMADWANDDKDLFGWRAETAETAFENYPTTDVKIAEQEYFDNGILMIAMVRAGVELAFEAMTASGIIDESAYYESLHELPLIANTVARKRLYEMNVVISDTAEYGNYLFANVAVPLLREKFMPKVGTDVIGKGLGVVSNQVDNATLIEVNSIIRNHPVEYIGEELRGYMKDMKRIAVGD</sequence>
<accession>A5F449</accession>
<accession>C3M351</accession>
<dbReference type="EC" id="1.1.1.86" evidence="1"/>
<dbReference type="EMBL" id="CP000627">
    <property type="protein sequence ID" value="ABQ21832.1"/>
    <property type="molecule type" value="Genomic_DNA"/>
</dbReference>
<dbReference type="EMBL" id="CP001235">
    <property type="protein sequence ID" value="ACP08230.1"/>
    <property type="molecule type" value="Genomic_DNA"/>
</dbReference>
<dbReference type="RefSeq" id="WP_000024919.1">
    <property type="nucleotide sequence ID" value="NZ_JAACZH010000031.1"/>
</dbReference>
<dbReference type="SMR" id="A5F449"/>
<dbReference type="KEGG" id="vco:VC0395_A2550"/>
<dbReference type="KEGG" id="vcr:VC395_0205"/>
<dbReference type="PATRIC" id="fig|345073.21.peg.194"/>
<dbReference type="eggNOG" id="COG0059">
    <property type="taxonomic scope" value="Bacteria"/>
</dbReference>
<dbReference type="HOGENOM" id="CLU_551905_0_0_6"/>
<dbReference type="OrthoDB" id="9804088at2"/>
<dbReference type="UniPathway" id="UPA00047">
    <property type="reaction ID" value="UER00056"/>
</dbReference>
<dbReference type="UniPathway" id="UPA00049">
    <property type="reaction ID" value="UER00060"/>
</dbReference>
<dbReference type="Proteomes" id="UP000000249">
    <property type="component" value="Chromosome 2"/>
</dbReference>
<dbReference type="GO" id="GO:0005829">
    <property type="term" value="C:cytosol"/>
    <property type="evidence" value="ECO:0007669"/>
    <property type="project" value="TreeGrafter"/>
</dbReference>
<dbReference type="GO" id="GO:0004455">
    <property type="term" value="F:ketol-acid reductoisomerase activity"/>
    <property type="evidence" value="ECO:0007669"/>
    <property type="project" value="UniProtKB-UniRule"/>
</dbReference>
<dbReference type="GO" id="GO:0000287">
    <property type="term" value="F:magnesium ion binding"/>
    <property type="evidence" value="ECO:0007669"/>
    <property type="project" value="UniProtKB-UniRule"/>
</dbReference>
<dbReference type="GO" id="GO:0009097">
    <property type="term" value="P:isoleucine biosynthetic process"/>
    <property type="evidence" value="ECO:0007669"/>
    <property type="project" value="UniProtKB-UniRule"/>
</dbReference>
<dbReference type="GO" id="GO:0009099">
    <property type="term" value="P:L-valine biosynthetic process"/>
    <property type="evidence" value="ECO:0007669"/>
    <property type="project" value="UniProtKB-UniRule"/>
</dbReference>
<dbReference type="FunFam" id="1.10.1040.10:FF:000007">
    <property type="entry name" value="Ketol-acid reductoisomerase (NADP(+))"/>
    <property type="match status" value="1"/>
</dbReference>
<dbReference type="FunFam" id="3.40.50.720:FF:000043">
    <property type="entry name" value="Ketol-acid reductoisomerase (NADP(+))"/>
    <property type="match status" value="1"/>
</dbReference>
<dbReference type="Gene3D" id="1.10.1040.10">
    <property type="entry name" value="N-(1-d-carboxylethyl)-l-norvaline Dehydrogenase, domain 2"/>
    <property type="match status" value="1"/>
</dbReference>
<dbReference type="Gene3D" id="3.40.50.720">
    <property type="entry name" value="NAD(P)-binding Rossmann-like Domain"/>
    <property type="match status" value="1"/>
</dbReference>
<dbReference type="HAMAP" id="MF_00435">
    <property type="entry name" value="IlvC"/>
    <property type="match status" value="1"/>
</dbReference>
<dbReference type="InterPro" id="IPR008927">
    <property type="entry name" value="6-PGluconate_DH-like_C_sf"/>
</dbReference>
<dbReference type="InterPro" id="IPR013328">
    <property type="entry name" value="6PGD_dom2"/>
</dbReference>
<dbReference type="InterPro" id="IPR013023">
    <property type="entry name" value="KARI"/>
</dbReference>
<dbReference type="InterPro" id="IPR000506">
    <property type="entry name" value="KARI_C"/>
</dbReference>
<dbReference type="InterPro" id="IPR013116">
    <property type="entry name" value="KARI_N"/>
</dbReference>
<dbReference type="InterPro" id="IPR036291">
    <property type="entry name" value="NAD(P)-bd_dom_sf"/>
</dbReference>
<dbReference type="NCBIfam" id="TIGR00465">
    <property type="entry name" value="ilvC"/>
    <property type="match status" value="1"/>
</dbReference>
<dbReference type="NCBIfam" id="NF003557">
    <property type="entry name" value="PRK05225.1"/>
    <property type="match status" value="1"/>
</dbReference>
<dbReference type="PANTHER" id="PTHR21371">
    <property type="entry name" value="KETOL-ACID REDUCTOISOMERASE, MITOCHONDRIAL"/>
    <property type="match status" value="1"/>
</dbReference>
<dbReference type="PANTHER" id="PTHR21371:SF1">
    <property type="entry name" value="KETOL-ACID REDUCTOISOMERASE, MITOCHONDRIAL"/>
    <property type="match status" value="1"/>
</dbReference>
<dbReference type="Pfam" id="PF01450">
    <property type="entry name" value="KARI_C"/>
    <property type="match status" value="2"/>
</dbReference>
<dbReference type="Pfam" id="PF07991">
    <property type="entry name" value="KARI_N"/>
    <property type="match status" value="1"/>
</dbReference>
<dbReference type="SUPFAM" id="SSF48179">
    <property type="entry name" value="6-phosphogluconate dehydrogenase C-terminal domain-like"/>
    <property type="match status" value="2"/>
</dbReference>
<dbReference type="SUPFAM" id="SSF51735">
    <property type="entry name" value="NAD(P)-binding Rossmann-fold domains"/>
    <property type="match status" value="1"/>
</dbReference>
<dbReference type="PROSITE" id="PS51851">
    <property type="entry name" value="KARI_C"/>
    <property type="match status" value="2"/>
</dbReference>
<dbReference type="PROSITE" id="PS51850">
    <property type="entry name" value="KARI_N"/>
    <property type="match status" value="1"/>
</dbReference>
<keyword id="KW-0028">Amino-acid biosynthesis</keyword>
<keyword id="KW-0100">Branched-chain amino acid biosynthesis</keyword>
<keyword id="KW-0460">Magnesium</keyword>
<keyword id="KW-0479">Metal-binding</keyword>
<keyword id="KW-0521">NADP</keyword>
<keyword id="KW-0560">Oxidoreductase</keyword>
<keyword id="KW-0677">Repeat</keyword>
<comment type="function">
    <text evidence="1">Involved in the biosynthesis of branched-chain amino acids (BCAA). Catalyzes an alkyl-migration followed by a ketol-acid reduction of (S)-2-acetolactate (S2AL) to yield (R)-2,3-dihydroxy-isovalerate. In the isomerase reaction, S2AL is rearranged via a Mg-dependent methyl migration to produce 3-hydroxy-3-methyl-2-ketobutyrate (HMKB). In the reductase reaction, this 2-ketoacid undergoes a metal-dependent reduction by NADPH to yield (R)-2,3-dihydroxy-isovalerate.</text>
</comment>
<comment type="catalytic activity">
    <reaction evidence="1">
        <text>(2R)-2,3-dihydroxy-3-methylbutanoate + NADP(+) = (2S)-2-acetolactate + NADPH + H(+)</text>
        <dbReference type="Rhea" id="RHEA:22068"/>
        <dbReference type="ChEBI" id="CHEBI:15378"/>
        <dbReference type="ChEBI" id="CHEBI:49072"/>
        <dbReference type="ChEBI" id="CHEBI:57783"/>
        <dbReference type="ChEBI" id="CHEBI:58349"/>
        <dbReference type="ChEBI" id="CHEBI:58476"/>
        <dbReference type="EC" id="1.1.1.86"/>
    </reaction>
</comment>
<comment type="catalytic activity">
    <reaction evidence="1">
        <text>(2R,3R)-2,3-dihydroxy-3-methylpentanoate + NADP(+) = (S)-2-ethyl-2-hydroxy-3-oxobutanoate + NADPH + H(+)</text>
        <dbReference type="Rhea" id="RHEA:13493"/>
        <dbReference type="ChEBI" id="CHEBI:15378"/>
        <dbReference type="ChEBI" id="CHEBI:49256"/>
        <dbReference type="ChEBI" id="CHEBI:49258"/>
        <dbReference type="ChEBI" id="CHEBI:57783"/>
        <dbReference type="ChEBI" id="CHEBI:58349"/>
        <dbReference type="EC" id="1.1.1.86"/>
    </reaction>
</comment>
<comment type="cofactor">
    <cofactor evidence="1">
        <name>Mg(2+)</name>
        <dbReference type="ChEBI" id="CHEBI:18420"/>
    </cofactor>
    <text evidence="1">Binds 2 magnesium ions per subunit.</text>
</comment>
<comment type="pathway">
    <text evidence="1">Amino-acid biosynthesis; L-isoleucine biosynthesis; L-isoleucine from 2-oxobutanoate: step 2/4.</text>
</comment>
<comment type="pathway">
    <text evidence="1">Amino-acid biosynthesis; L-valine biosynthesis; L-valine from pyruvate: step 2/4.</text>
</comment>
<comment type="similarity">
    <text evidence="1">Belongs to the ketol-acid reductoisomerase family.</text>
</comment>
<organism>
    <name type="scientific">Vibrio cholerae serotype O1 (strain ATCC 39541 / Classical Ogawa 395 / O395)</name>
    <dbReference type="NCBI Taxonomy" id="345073"/>
    <lineage>
        <taxon>Bacteria</taxon>
        <taxon>Pseudomonadati</taxon>
        <taxon>Pseudomonadota</taxon>
        <taxon>Gammaproteobacteria</taxon>
        <taxon>Vibrionales</taxon>
        <taxon>Vibrionaceae</taxon>
        <taxon>Vibrio</taxon>
    </lineage>
</organism>
<reference key="1">
    <citation type="submission" date="2007-03" db="EMBL/GenBank/DDBJ databases">
        <authorList>
            <person name="Heidelberg J."/>
        </authorList>
    </citation>
    <scope>NUCLEOTIDE SEQUENCE [LARGE SCALE GENOMIC DNA]</scope>
    <source>
        <strain>ATCC 39541 / Classical Ogawa 395 / O395</strain>
    </source>
</reference>
<reference key="2">
    <citation type="journal article" date="2008" name="PLoS ONE">
        <title>A recalibrated molecular clock and independent origins for the cholera pandemic clones.</title>
        <authorList>
            <person name="Feng L."/>
            <person name="Reeves P.R."/>
            <person name="Lan R."/>
            <person name="Ren Y."/>
            <person name="Gao C."/>
            <person name="Zhou Z."/>
            <person name="Ren Y."/>
            <person name="Cheng J."/>
            <person name="Wang W."/>
            <person name="Wang J."/>
            <person name="Qian W."/>
            <person name="Li D."/>
            <person name="Wang L."/>
        </authorList>
    </citation>
    <scope>NUCLEOTIDE SEQUENCE [LARGE SCALE GENOMIC DNA]</scope>
    <source>
        <strain>ATCC 39541 / Classical Ogawa 395 / O395</strain>
    </source>
</reference>
<feature type="chain" id="PRO_1000072327" description="Ketol-acid reductoisomerase (NADP(+))">
    <location>
        <begin position="1"/>
        <end position="494"/>
    </location>
</feature>
<feature type="domain" description="KARI N-terminal Rossmann" evidence="2">
    <location>
        <begin position="14"/>
        <end position="208"/>
    </location>
</feature>
<feature type="domain" description="KARI C-terminal knotted 1" evidence="3">
    <location>
        <begin position="209"/>
        <end position="344"/>
    </location>
</feature>
<feature type="domain" description="KARI C-terminal knotted 2" evidence="3">
    <location>
        <begin position="345"/>
        <end position="487"/>
    </location>
</feature>
<feature type="active site" evidence="1">
    <location>
        <position position="132"/>
    </location>
</feature>
<feature type="binding site" evidence="1">
    <location>
        <begin position="45"/>
        <end position="48"/>
    </location>
    <ligand>
        <name>NADP(+)</name>
        <dbReference type="ChEBI" id="CHEBI:58349"/>
    </ligand>
</feature>
<feature type="binding site" evidence="1">
    <location>
        <position position="68"/>
    </location>
    <ligand>
        <name>NADP(+)</name>
        <dbReference type="ChEBI" id="CHEBI:58349"/>
    </ligand>
</feature>
<feature type="binding site" evidence="1">
    <location>
        <position position="76"/>
    </location>
    <ligand>
        <name>NADP(+)</name>
        <dbReference type="ChEBI" id="CHEBI:58349"/>
    </ligand>
</feature>
<feature type="binding site" evidence="1">
    <location>
        <position position="78"/>
    </location>
    <ligand>
        <name>NADP(+)</name>
        <dbReference type="ChEBI" id="CHEBI:58349"/>
    </ligand>
</feature>
<feature type="binding site" evidence="1">
    <location>
        <begin position="108"/>
        <end position="110"/>
    </location>
    <ligand>
        <name>NADP(+)</name>
        <dbReference type="ChEBI" id="CHEBI:58349"/>
    </ligand>
</feature>
<feature type="binding site" evidence="1">
    <location>
        <position position="158"/>
    </location>
    <ligand>
        <name>NADP(+)</name>
        <dbReference type="ChEBI" id="CHEBI:58349"/>
    </ligand>
</feature>
<feature type="binding site" evidence="1">
    <location>
        <position position="217"/>
    </location>
    <ligand>
        <name>Mg(2+)</name>
        <dbReference type="ChEBI" id="CHEBI:18420"/>
        <label>1</label>
    </ligand>
</feature>
<feature type="binding site" evidence="1">
    <location>
        <position position="217"/>
    </location>
    <ligand>
        <name>Mg(2+)</name>
        <dbReference type="ChEBI" id="CHEBI:18420"/>
        <label>2</label>
    </ligand>
</feature>
<feature type="binding site" evidence="1">
    <location>
        <position position="221"/>
    </location>
    <ligand>
        <name>Mg(2+)</name>
        <dbReference type="ChEBI" id="CHEBI:18420"/>
        <label>1</label>
    </ligand>
</feature>
<feature type="binding site" evidence="1">
    <location>
        <position position="389"/>
    </location>
    <ligand>
        <name>Mg(2+)</name>
        <dbReference type="ChEBI" id="CHEBI:18420"/>
        <label>2</label>
    </ligand>
</feature>
<feature type="binding site" evidence="1">
    <location>
        <position position="393"/>
    </location>
    <ligand>
        <name>Mg(2+)</name>
        <dbReference type="ChEBI" id="CHEBI:18420"/>
        <label>2</label>
    </ligand>
</feature>
<feature type="binding site" evidence="1">
    <location>
        <position position="414"/>
    </location>
    <ligand>
        <name>substrate</name>
    </ligand>
</feature>
<proteinExistence type="inferred from homology"/>
<gene>
    <name evidence="1" type="primary">ilvC</name>
    <name type="ordered locus">VC0395_A2550</name>
    <name type="ordered locus">VC395_0205</name>
</gene>
<evidence type="ECO:0000255" key="1">
    <source>
        <dbReference type="HAMAP-Rule" id="MF_00435"/>
    </source>
</evidence>
<evidence type="ECO:0000255" key="2">
    <source>
        <dbReference type="PROSITE-ProRule" id="PRU01197"/>
    </source>
</evidence>
<evidence type="ECO:0000255" key="3">
    <source>
        <dbReference type="PROSITE-ProRule" id="PRU01198"/>
    </source>
</evidence>